<protein>
    <recommendedName>
        <fullName evidence="1">Thymidine kinase</fullName>
        <ecNumber evidence="1">2.7.1.21</ecNumber>
    </recommendedName>
</protein>
<sequence>MSGKLTVITGPMYSGKTTELLSFVEIYKLGKKKVAVFKPKIDSRYHSTMIVSHSGNGVEAHVIERPEEMRKYIEEDTRGVFIDEVQFFSPGLFEVVKDLLDRGIDVFCAGLDLTHKQNPFETTALLLSLADTVIKKKAVCHRCGEYNATLTLKVAGGEEEIDVGGQEKYIAVCRDCYNTLKKRV</sequence>
<feature type="chain" id="PRO_1000095438" description="Thymidine kinase">
    <location>
        <begin position="1"/>
        <end position="184"/>
    </location>
</feature>
<feature type="active site" description="Proton acceptor" evidence="1">
    <location>
        <position position="84"/>
    </location>
</feature>
<feature type="binding site" evidence="1">
    <location>
        <begin position="10"/>
        <end position="17"/>
    </location>
    <ligand>
        <name>ATP</name>
        <dbReference type="ChEBI" id="CHEBI:30616"/>
    </ligand>
</feature>
<feature type="binding site" evidence="1">
    <location>
        <begin position="83"/>
        <end position="86"/>
    </location>
    <ligand>
        <name>ATP</name>
        <dbReference type="ChEBI" id="CHEBI:30616"/>
    </ligand>
</feature>
<feature type="binding site" evidence="1">
    <location>
        <position position="140"/>
    </location>
    <ligand>
        <name>Zn(2+)</name>
        <dbReference type="ChEBI" id="CHEBI:29105"/>
    </ligand>
</feature>
<feature type="binding site" evidence="1">
    <location>
        <position position="143"/>
    </location>
    <ligand>
        <name>Zn(2+)</name>
        <dbReference type="ChEBI" id="CHEBI:29105"/>
    </ligand>
</feature>
<feature type="binding site" evidence="1">
    <location>
        <position position="173"/>
    </location>
    <ligand>
        <name>Zn(2+)</name>
        <dbReference type="ChEBI" id="CHEBI:29105"/>
    </ligand>
</feature>
<feature type="binding site" evidence="1">
    <location>
        <position position="176"/>
    </location>
    <ligand>
        <name>Zn(2+)</name>
        <dbReference type="ChEBI" id="CHEBI:29105"/>
    </ligand>
</feature>
<evidence type="ECO:0000255" key="1">
    <source>
        <dbReference type="HAMAP-Rule" id="MF_00124"/>
    </source>
</evidence>
<accession>B1L989</accession>
<gene>
    <name evidence="1" type="primary">tdk</name>
    <name type="ordered locus">TRQ2_0533</name>
</gene>
<name>KITH_THESQ</name>
<organism>
    <name type="scientific">Thermotoga sp. (strain RQ2)</name>
    <dbReference type="NCBI Taxonomy" id="126740"/>
    <lineage>
        <taxon>Bacteria</taxon>
        <taxon>Thermotogati</taxon>
        <taxon>Thermotogota</taxon>
        <taxon>Thermotogae</taxon>
        <taxon>Thermotogales</taxon>
        <taxon>Thermotogaceae</taxon>
        <taxon>Thermotoga</taxon>
    </lineage>
</organism>
<comment type="catalytic activity">
    <reaction evidence="1">
        <text>thymidine + ATP = dTMP + ADP + H(+)</text>
        <dbReference type="Rhea" id="RHEA:19129"/>
        <dbReference type="ChEBI" id="CHEBI:15378"/>
        <dbReference type="ChEBI" id="CHEBI:17748"/>
        <dbReference type="ChEBI" id="CHEBI:30616"/>
        <dbReference type="ChEBI" id="CHEBI:63528"/>
        <dbReference type="ChEBI" id="CHEBI:456216"/>
        <dbReference type="EC" id="2.7.1.21"/>
    </reaction>
</comment>
<comment type="subunit">
    <text evidence="1">Homotetramer.</text>
</comment>
<comment type="subcellular location">
    <subcellularLocation>
        <location evidence="1">Cytoplasm</location>
    </subcellularLocation>
</comment>
<comment type="similarity">
    <text evidence="1">Belongs to the thymidine kinase family.</text>
</comment>
<proteinExistence type="inferred from homology"/>
<reference key="1">
    <citation type="journal article" date="2011" name="J. Bacteriol.">
        <title>Genome sequence of Thermotoga sp. strain RQ2, a hyperthermophilic bacterium isolated from a geothermally heated region of the seafloor near Ribeira Quente, the Azores.</title>
        <authorList>
            <person name="Swithers K.S."/>
            <person name="DiPippo J.L."/>
            <person name="Bruce D.C."/>
            <person name="Detter C."/>
            <person name="Tapia R."/>
            <person name="Han S."/>
            <person name="Saunders E."/>
            <person name="Goodwin L.A."/>
            <person name="Han J."/>
            <person name="Woyke T."/>
            <person name="Pitluck S."/>
            <person name="Pennacchio L."/>
            <person name="Nolan M."/>
            <person name="Mikhailova N."/>
            <person name="Lykidis A."/>
            <person name="Land M.L."/>
            <person name="Brettin T."/>
            <person name="Stetter K.O."/>
            <person name="Nelson K.E."/>
            <person name="Gogarten J.P."/>
            <person name="Noll K.M."/>
        </authorList>
    </citation>
    <scope>NUCLEOTIDE SEQUENCE [LARGE SCALE GENOMIC DNA]</scope>
    <source>
        <strain>RQ2</strain>
    </source>
</reference>
<dbReference type="EC" id="2.7.1.21" evidence="1"/>
<dbReference type="EMBL" id="CP000969">
    <property type="protein sequence ID" value="ACB08887.1"/>
    <property type="molecule type" value="Genomic_DNA"/>
</dbReference>
<dbReference type="RefSeq" id="WP_012310602.1">
    <property type="nucleotide sequence ID" value="NC_010483.1"/>
</dbReference>
<dbReference type="SMR" id="B1L989"/>
<dbReference type="KEGG" id="trq:TRQ2_0533"/>
<dbReference type="HOGENOM" id="CLU_064400_3_0_0"/>
<dbReference type="Proteomes" id="UP000001687">
    <property type="component" value="Chromosome"/>
</dbReference>
<dbReference type="GO" id="GO:0005829">
    <property type="term" value="C:cytosol"/>
    <property type="evidence" value="ECO:0007669"/>
    <property type="project" value="TreeGrafter"/>
</dbReference>
<dbReference type="GO" id="GO:0005524">
    <property type="term" value="F:ATP binding"/>
    <property type="evidence" value="ECO:0007669"/>
    <property type="project" value="UniProtKB-UniRule"/>
</dbReference>
<dbReference type="GO" id="GO:0004797">
    <property type="term" value="F:thymidine kinase activity"/>
    <property type="evidence" value="ECO:0007669"/>
    <property type="project" value="UniProtKB-UniRule"/>
</dbReference>
<dbReference type="GO" id="GO:0008270">
    <property type="term" value="F:zinc ion binding"/>
    <property type="evidence" value="ECO:0007669"/>
    <property type="project" value="UniProtKB-UniRule"/>
</dbReference>
<dbReference type="GO" id="GO:0071897">
    <property type="term" value="P:DNA biosynthetic process"/>
    <property type="evidence" value="ECO:0007669"/>
    <property type="project" value="UniProtKB-KW"/>
</dbReference>
<dbReference type="GO" id="GO:0046104">
    <property type="term" value="P:thymidine metabolic process"/>
    <property type="evidence" value="ECO:0007669"/>
    <property type="project" value="TreeGrafter"/>
</dbReference>
<dbReference type="FunFam" id="3.30.60.20:FF:000086">
    <property type="entry name" value="Thymidine kinase"/>
    <property type="match status" value="1"/>
</dbReference>
<dbReference type="FunFam" id="3.40.50.300:FF:001270">
    <property type="entry name" value="Thymidine kinase"/>
    <property type="match status" value="1"/>
</dbReference>
<dbReference type="Gene3D" id="3.30.60.20">
    <property type="match status" value="1"/>
</dbReference>
<dbReference type="Gene3D" id="3.40.50.300">
    <property type="entry name" value="P-loop containing nucleotide triphosphate hydrolases"/>
    <property type="match status" value="1"/>
</dbReference>
<dbReference type="HAMAP" id="MF_00124">
    <property type="entry name" value="Thymidine_kinase"/>
    <property type="match status" value="1"/>
</dbReference>
<dbReference type="InterPro" id="IPR027417">
    <property type="entry name" value="P-loop_NTPase"/>
</dbReference>
<dbReference type="InterPro" id="IPR001267">
    <property type="entry name" value="Thymidine_kinase"/>
</dbReference>
<dbReference type="InterPro" id="IPR020633">
    <property type="entry name" value="Thymidine_kinase_CS"/>
</dbReference>
<dbReference type="NCBIfam" id="NF003296">
    <property type="entry name" value="PRK04296.1-1"/>
    <property type="match status" value="1"/>
</dbReference>
<dbReference type="PANTHER" id="PTHR11441">
    <property type="entry name" value="THYMIDINE KINASE"/>
    <property type="match status" value="1"/>
</dbReference>
<dbReference type="PANTHER" id="PTHR11441:SF0">
    <property type="entry name" value="THYMIDINE KINASE, CYTOSOLIC"/>
    <property type="match status" value="1"/>
</dbReference>
<dbReference type="Pfam" id="PF00265">
    <property type="entry name" value="TK"/>
    <property type="match status" value="1"/>
</dbReference>
<dbReference type="PIRSF" id="PIRSF035805">
    <property type="entry name" value="TK_cell"/>
    <property type="match status" value="1"/>
</dbReference>
<dbReference type="SUPFAM" id="SSF57716">
    <property type="entry name" value="Glucocorticoid receptor-like (DNA-binding domain)"/>
    <property type="match status" value="1"/>
</dbReference>
<dbReference type="SUPFAM" id="SSF52540">
    <property type="entry name" value="P-loop containing nucleoside triphosphate hydrolases"/>
    <property type="match status" value="1"/>
</dbReference>
<dbReference type="PROSITE" id="PS00603">
    <property type="entry name" value="TK_CELLULAR_TYPE"/>
    <property type="match status" value="1"/>
</dbReference>
<keyword id="KW-0067">ATP-binding</keyword>
<keyword id="KW-0963">Cytoplasm</keyword>
<keyword id="KW-0237">DNA synthesis</keyword>
<keyword id="KW-0418">Kinase</keyword>
<keyword id="KW-0479">Metal-binding</keyword>
<keyword id="KW-0547">Nucleotide-binding</keyword>
<keyword id="KW-0808">Transferase</keyword>
<keyword id="KW-0862">Zinc</keyword>